<accession>A7FJJ4</accession>
<feature type="chain" id="PRO_1000061102" description="Uridine kinase">
    <location>
        <begin position="1"/>
        <end position="213"/>
    </location>
</feature>
<feature type="binding site" evidence="1">
    <location>
        <begin position="15"/>
        <end position="22"/>
    </location>
    <ligand>
        <name>ATP</name>
        <dbReference type="ChEBI" id="CHEBI:30616"/>
    </ligand>
</feature>
<name>URK_YERP3</name>
<sequence length="213" mass="24453">MTDKAHQCVIIGIAGASASGKSLIASTLYRELREQVGDQHIGVIPEDGYYKDQSHLSMEERVKTNYDHPSAMDHNLLLEHLQALKAGKPVELPLYSYTEHTRKKETVHLEPKKVIILEGILLLTDIRLRQEMNFSIFVDTPLDICLMRRMKRDVNERGRSMDSVMAQYQKTVRPMFLQFIEPSKQYADIIVPRGGKNRIAIDILKAKISQFFE</sequence>
<proteinExistence type="inferred from homology"/>
<reference key="1">
    <citation type="journal article" date="2007" name="PLoS Genet.">
        <title>The complete genome sequence of Yersinia pseudotuberculosis IP31758, the causative agent of Far East scarlet-like fever.</title>
        <authorList>
            <person name="Eppinger M."/>
            <person name="Rosovitz M.J."/>
            <person name="Fricke W.F."/>
            <person name="Rasko D.A."/>
            <person name="Kokorina G."/>
            <person name="Fayolle C."/>
            <person name="Lindler L.E."/>
            <person name="Carniel E."/>
            <person name="Ravel J."/>
        </authorList>
    </citation>
    <scope>NUCLEOTIDE SEQUENCE [LARGE SCALE GENOMIC DNA]</scope>
    <source>
        <strain>IP 31758</strain>
    </source>
</reference>
<protein>
    <recommendedName>
        <fullName evidence="1">Uridine kinase</fullName>
        <ecNumber evidence="1">2.7.1.48</ecNumber>
    </recommendedName>
    <alternativeName>
        <fullName evidence="1">Cytidine monophosphokinase</fullName>
    </alternativeName>
    <alternativeName>
        <fullName evidence="1">Uridine monophosphokinase</fullName>
    </alternativeName>
</protein>
<evidence type="ECO:0000255" key="1">
    <source>
        <dbReference type="HAMAP-Rule" id="MF_00551"/>
    </source>
</evidence>
<keyword id="KW-0067">ATP-binding</keyword>
<keyword id="KW-0963">Cytoplasm</keyword>
<keyword id="KW-0418">Kinase</keyword>
<keyword id="KW-0547">Nucleotide-binding</keyword>
<keyword id="KW-0808">Transferase</keyword>
<comment type="catalytic activity">
    <reaction evidence="1">
        <text>uridine + ATP = UMP + ADP + H(+)</text>
        <dbReference type="Rhea" id="RHEA:16825"/>
        <dbReference type="ChEBI" id="CHEBI:15378"/>
        <dbReference type="ChEBI" id="CHEBI:16704"/>
        <dbReference type="ChEBI" id="CHEBI:30616"/>
        <dbReference type="ChEBI" id="CHEBI:57865"/>
        <dbReference type="ChEBI" id="CHEBI:456216"/>
        <dbReference type="EC" id="2.7.1.48"/>
    </reaction>
</comment>
<comment type="catalytic activity">
    <reaction evidence="1">
        <text>cytidine + ATP = CMP + ADP + H(+)</text>
        <dbReference type="Rhea" id="RHEA:24674"/>
        <dbReference type="ChEBI" id="CHEBI:15378"/>
        <dbReference type="ChEBI" id="CHEBI:17562"/>
        <dbReference type="ChEBI" id="CHEBI:30616"/>
        <dbReference type="ChEBI" id="CHEBI:60377"/>
        <dbReference type="ChEBI" id="CHEBI:456216"/>
        <dbReference type="EC" id="2.7.1.48"/>
    </reaction>
</comment>
<comment type="pathway">
    <text evidence="1">Pyrimidine metabolism; CTP biosynthesis via salvage pathway; CTP from cytidine: step 1/3.</text>
</comment>
<comment type="pathway">
    <text evidence="1">Pyrimidine metabolism; UMP biosynthesis via salvage pathway; UMP from uridine: step 1/1.</text>
</comment>
<comment type="subcellular location">
    <subcellularLocation>
        <location evidence="1">Cytoplasm</location>
    </subcellularLocation>
</comment>
<comment type="similarity">
    <text evidence="1">Belongs to the uridine kinase family.</text>
</comment>
<organism>
    <name type="scientific">Yersinia pseudotuberculosis serotype O:1b (strain IP 31758)</name>
    <dbReference type="NCBI Taxonomy" id="349747"/>
    <lineage>
        <taxon>Bacteria</taxon>
        <taxon>Pseudomonadati</taxon>
        <taxon>Pseudomonadota</taxon>
        <taxon>Gammaproteobacteria</taxon>
        <taxon>Enterobacterales</taxon>
        <taxon>Yersiniaceae</taxon>
        <taxon>Yersinia</taxon>
    </lineage>
</organism>
<gene>
    <name evidence="1" type="primary">udk</name>
    <name type="ordered locus">YpsIP31758_2453</name>
</gene>
<dbReference type="EC" id="2.7.1.48" evidence="1"/>
<dbReference type="EMBL" id="CP000720">
    <property type="protein sequence ID" value="ABS47374.1"/>
    <property type="molecule type" value="Genomic_DNA"/>
</dbReference>
<dbReference type="RefSeq" id="WP_002211872.1">
    <property type="nucleotide sequence ID" value="NC_009708.1"/>
</dbReference>
<dbReference type="SMR" id="A7FJJ4"/>
<dbReference type="GeneID" id="57977044"/>
<dbReference type="KEGG" id="ypi:YpsIP31758_2453"/>
<dbReference type="HOGENOM" id="CLU_021278_1_2_6"/>
<dbReference type="UniPathway" id="UPA00574">
    <property type="reaction ID" value="UER00637"/>
</dbReference>
<dbReference type="UniPathway" id="UPA00579">
    <property type="reaction ID" value="UER00640"/>
</dbReference>
<dbReference type="Proteomes" id="UP000002412">
    <property type="component" value="Chromosome"/>
</dbReference>
<dbReference type="GO" id="GO:0005737">
    <property type="term" value="C:cytoplasm"/>
    <property type="evidence" value="ECO:0007669"/>
    <property type="project" value="UniProtKB-SubCell"/>
</dbReference>
<dbReference type="GO" id="GO:0005524">
    <property type="term" value="F:ATP binding"/>
    <property type="evidence" value="ECO:0007669"/>
    <property type="project" value="UniProtKB-UniRule"/>
</dbReference>
<dbReference type="GO" id="GO:0043771">
    <property type="term" value="F:cytidine kinase activity"/>
    <property type="evidence" value="ECO:0007669"/>
    <property type="project" value="RHEA"/>
</dbReference>
<dbReference type="GO" id="GO:0004849">
    <property type="term" value="F:uridine kinase activity"/>
    <property type="evidence" value="ECO:0007669"/>
    <property type="project" value="UniProtKB-UniRule"/>
</dbReference>
<dbReference type="GO" id="GO:0044211">
    <property type="term" value="P:CTP salvage"/>
    <property type="evidence" value="ECO:0007669"/>
    <property type="project" value="UniProtKB-UniRule"/>
</dbReference>
<dbReference type="GO" id="GO:0044206">
    <property type="term" value="P:UMP salvage"/>
    <property type="evidence" value="ECO:0007669"/>
    <property type="project" value="UniProtKB-UniRule"/>
</dbReference>
<dbReference type="CDD" id="cd02023">
    <property type="entry name" value="UMPK"/>
    <property type="match status" value="1"/>
</dbReference>
<dbReference type="FunFam" id="3.40.50.300:FF:000252">
    <property type="entry name" value="Uridine kinase"/>
    <property type="match status" value="1"/>
</dbReference>
<dbReference type="Gene3D" id="3.40.50.300">
    <property type="entry name" value="P-loop containing nucleotide triphosphate hydrolases"/>
    <property type="match status" value="1"/>
</dbReference>
<dbReference type="HAMAP" id="MF_00551">
    <property type="entry name" value="Uridine_kinase"/>
    <property type="match status" value="1"/>
</dbReference>
<dbReference type="InterPro" id="IPR027417">
    <property type="entry name" value="P-loop_NTPase"/>
</dbReference>
<dbReference type="InterPro" id="IPR006083">
    <property type="entry name" value="PRK/URK"/>
</dbReference>
<dbReference type="InterPro" id="IPR026008">
    <property type="entry name" value="Uridine_kinase"/>
</dbReference>
<dbReference type="InterPro" id="IPR000764">
    <property type="entry name" value="Uridine_kinase-like"/>
</dbReference>
<dbReference type="NCBIfam" id="NF004018">
    <property type="entry name" value="PRK05480.1"/>
    <property type="match status" value="1"/>
</dbReference>
<dbReference type="NCBIfam" id="TIGR00235">
    <property type="entry name" value="udk"/>
    <property type="match status" value="1"/>
</dbReference>
<dbReference type="PANTHER" id="PTHR10285">
    <property type="entry name" value="URIDINE KINASE"/>
    <property type="match status" value="1"/>
</dbReference>
<dbReference type="Pfam" id="PF00485">
    <property type="entry name" value="PRK"/>
    <property type="match status" value="1"/>
</dbReference>
<dbReference type="PRINTS" id="PR00988">
    <property type="entry name" value="URIDINKINASE"/>
</dbReference>
<dbReference type="SUPFAM" id="SSF52540">
    <property type="entry name" value="P-loop containing nucleoside triphosphate hydrolases"/>
    <property type="match status" value="1"/>
</dbReference>